<reference key="1">
    <citation type="journal article" date="2005" name="Science">
        <title>Extensive DNA inversions in the B. fragilis genome control variable gene expression.</title>
        <authorList>
            <person name="Cerdeno-Tarraga A.-M."/>
            <person name="Patrick S."/>
            <person name="Crossman L.C."/>
            <person name="Blakely G."/>
            <person name="Abratt V."/>
            <person name="Lennard N."/>
            <person name="Poxton I."/>
            <person name="Duerden B."/>
            <person name="Harris B."/>
            <person name="Quail M.A."/>
            <person name="Barron A."/>
            <person name="Clark L."/>
            <person name="Corton C."/>
            <person name="Doggett J."/>
            <person name="Holden M.T.G."/>
            <person name="Larke N."/>
            <person name="Line A."/>
            <person name="Lord A."/>
            <person name="Norbertczak H."/>
            <person name="Ormond D."/>
            <person name="Price C."/>
            <person name="Rabbinowitsch E."/>
            <person name="Woodward J."/>
            <person name="Barrell B.G."/>
            <person name="Parkhill J."/>
        </authorList>
    </citation>
    <scope>NUCLEOTIDE SEQUENCE [LARGE SCALE GENOMIC DNA]</scope>
    <source>
        <strain>ATCC 25285 / DSM 2151 / CCUG 4856 / JCM 11019 / LMG 10263 / NCTC 9343 / Onslow / VPI 2553 / EN-2</strain>
    </source>
</reference>
<gene>
    <name evidence="1" type="primary">atpG</name>
    <name type="ordered locus">BF2235</name>
</gene>
<keyword id="KW-0066">ATP synthesis</keyword>
<keyword id="KW-0997">Cell inner membrane</keyword>
<keyword id="KW-1003">Cell membrane</keyword>
<keyword id="KW-0139">CF(1)</keyword>
<keyword id="KW-0375">Hydrogen ion transport</keyword>
<keyword id="KW-0406">Ion transport</keyword>
<keyword id="KW-0472">Membrane</keyword>
<keyword id="KW-0813">Transport</keyword>
<name>ATPG_BACFN</name>
<comment type="function">
    <text evidence="1">Produces ATP from ADP in the presence of a proton gradient across the membrane. The gamma chain is believed to be important in regulating ATPase activity and the flow of protons through the CF(0) complex.</text>
</comment>
<comment type="subunit">
    <text evidence="1">F-type ATPases have 2 components, CF(1) - the catalytic core - and CF(0) - the membrane proton channel. CF(1) has five subunits: alpha(3), beta(3), gamma(1), delta(1), epsilon(1). CF(0) has three main subunits: a, b and c.</text>
</comment>
<comment type="subcellular location">
    <subcellularLocation>
        <location evidence="1">Cell inner membrane</location>
        <topology evidence="1">Peripheral membrane protein</topology>
    </subcellularLocation>
</comment>
<comment type="similarity">
    <text evidence="1">Belongs to the ATPase gamma chain family.</text>
</comment>
<accession>Q5LD81</accession>
<dbReference type="EMBL" id="CR626927">
    <property type="protein sequence ID" value="CAH07929.1"/>
    <property type="molecule type" value="Genomic_DNA"/>
</dbReference>
<dbReference type="RefSeq" id="WP_005787494.1">
    <property type="nucleotide sequence ID" value="NZ_UFTH01000001.1"/>
</dbReference>
<dbReference type="SMR" id="Q5LD81"/>
<dbReference type="PaxDb" id="272559-BF9343_2148"/>
<dbReference type="KEGG" id="bfs:BF9343_2148"/>
<dbReference type="eggNOG" id="COG0224">
    <property type="taxonomic scope" value="Bacteria"/>
</dbReference>
<dbReference type="HOGENOM" id="CLU_050669_0_1_10"/>
<dbReference type="Proteomes" id="UP000006731">
    <property type="component" value="Chromosome"/>
</dbReference>
<dbReference type="GO" id="GO:0005886">
    <property type="term" value="C:plasma membrane"/>
    <property type="evidence" value="ECO:0007669"/>
    <property type="project" value="UniProtKB-SubCell"/>
</dbReference>
<dbReference type="GO" id="GO:0045259">
    <property type="term" value="C:proton-transporting ATP synthase complex"/>
    <property type="evidence" value="ECO:0007669"/>
    <property type="project" value="UniProtKB-KW"/>
</dbReference>
<dbReference type="GO" id="GO:0005524">
    <property type="term" value="F:ATP binding"/>
    <property type="evidence" value="ECO:0007669"/>
    <property type="project" value="UniProtKB-UniRule"/>
</dbReference>
<dbReference type="GO" id="GO:0046933">
    <property type="term" value="F:proton-transporting ATP synthase activity, rotational mechanism"/>
    <property type="evidence" value="ECO:0007669"/>
    <property type="project" value="UniProtKB-UniRule"/>
</dbReference>
<dbReference type="GO" id="GO:0042777">
    <property type="term" value="P:proton motive force-driven plasma membrane ATP synthesis"/>
    <property type="evidence" value="ECO:0007669"/>
    <property type="project" value="UniProtKB-UniRule"/>
</dbReference>
<dbReference type="CDD" id="cd12151">
    <property type="entry name" value="F1-ATPase_gamma"/>
    <property type="match status" value="1"/>
</dbReference>
<dbReference type="FunFam" id="1.10.287.80:FF:000006">
    <property type="entry name" value="ATP synthase gamma chain"/>
    <property type="match status" value="1"/>
</dbReference>
<dbReference type="Gene3D" id="3.40.1380.10">
    <property type="match status" value="1"/>
</dbReference>
<dbReference type="Gene3D" id="1.10.287.80">
    <property type="entry name" value="ATP synthase, gamma subunit, helix hairpin domain"/>
    <property type="match status" value="2"/>
</dbReference>
<dbReference type="HAMAP" id="MF_00815">
    <property type="entry name" value="ATP_synth_gamma_bact"/>
    <property type="match status" value="1"/>
</dbReference>
<dbReference type="InterPro" id="IPR035968">
    <property type="entry name" value="ATP_synth_F1_ATPase_gsu"/>
</dbReference>
<dbReference type="InterPro" id="IPR000131">
    <property type="entry name" value="ATP_synth_F1_gsu"/>
</dbReference>
<dbReference type="NCBIfam" id="TIGR01146">
    <property type="entry name" value="ATPsyn_F1gamma"/>
    <property type="match status" value="1"/>
</dbReference>
<dbReference type="NCBIfam" id="NF009959">
    <property type="entry name" value="PRK13426.1"/>
    <property type="match status" value="1"/>
</dbReference>
<dbReference type="PANTHER" id="PTHR11693">
    <property type="entry name" value="ATP SYNTHASE GAMMA CHAIN"/>
    <property type="match status" value="1"/>
</dbReference>
<dbReference type="PANTHER" id="PTHR11693:SF22">
    <property type="entry name" value="ATP SYNTHASE SUBUNIT GAMMA, MITOCHONDRIAL"/>
    <property type="match status" value="1"/>
</dbReference>
<dbReference type="Pfam" id="PF00231">
    <property type="entry name" value="ATP-synt"/>
    <property type="match status" value="1"/>
</dbReference>
<dbReference type="PRINTS" id="PR00126">
    <property type="entry name" value="ATPASEGAMMA"/>
</dbReference>
<dbReference type="SUPFAM" id="SSF52943">
    <property type="entry name" value="ATP synthase (F1-ATPase), gamma subunit"/>
    <property type="match status" value="1"/>
</dbReference>
<evidence type="ECO:0000255" key="1">
    <source>
        <dbReference type="HAMAP-Rule" id="MF_00815"/>
    </source>
</evidence>
<proteinExistence type="inferred from homology"/>
<feature type="chain" id="PRO_0000073237" description="ATP synthase gamma chain">
    <location>
        <begin position="1"/>
        <end position="290"/>
    </location>
</feature>
<protein>
    <recommendedName>
        <fullName evidence="1">ATP synthase gamma chain</fullName>
    </recommendedName>
    <alternativeName>
        <fullName evidence="1">ATP synthase F1 sector gamma subunit</fullName>
    </alternativeName>
    <alternativeName>
        <fullName evidence="1">F-ATPase gamma subunit</fullName>
    </alternativeName>
</protein>
<organism>
    <name type="scientific">Bacteroides fragilis (strain ATCC 25285 / DSM 2151 / CCUG 4856 / JCM 11019 / LMG 10263 / NCTC 9343 / Onslow / VPI 2553 / EN-2)</name>
    <dbReference type="NCBI Taxonomy" id="272559"/>
    <lineage>
        <taxon>Bacteria</taxon>
        <taxon>Pseudomonadati</taxon>
        <taxon>Bacteroidota</taxon>
        <taxon>Bacteroidia</taxon>
        <taxon>Bacteroidales</taxon>
        <taxon>Bacteroidaceae</taxon>
        <taxon>Bacteroides</taxon>
    </lineage>
</organism>
<sequence length="290" mass="32278">MASLKEVKTRINSVQSTRKITSAMKMVASAKLHKAQGAIENMLPYQRKLNKILTNFLSADLPVESPFCVERPVKRVAIVAFSSNSSLCGAFNANVLKMFLQTVGEYRELGQDNILIYPVGKKIEEAVKKLGFFPQGSYQKLADKPSYDEAAALAKLLMELFLEKNIDRVELIYHHFKSMGVQELLRERYLPIDLSAVQNDEERGGVVNDYIIEPSAAQLIADLIPQVLSQKIFTAALDSNASEHAARTLAMQIATDNANELIQELTKQYNKTRQQAITNELLDIVGGSMA</sequence>